<sequence length="375" mass="41713">MDDDVAALVVDNGSGMCKAGFAGDDAPRAVFPSIVGRPRHQGVMVGMGQKDSYVGDEAQSKRGILTLKYPVEHGIVTNWDDMEKIWHHTFYNELRIAPEENPLLLTEAPLNPKANREKMTQIMFETFNSPAMYVAIQAVLSLYASGRTTGIVLDSGDGVSHTVPIYEGYALPHAILRLDLAGRDQTDYLMKILTERGYSFTTTAEREIVRDIKEKLCYVALDFEQEMSTAASSSSLEKSYELPDGQVITIGNERFRCPESLFQPSFLGMESTGVHETTYNSIMKCDIDIRKDLYANTVLSGGTTMFPGIADRMQKEITALAPSTMKIKIIAPPERKYSVWIGGSILASLSTFQQMWISKQEYDESGPSIVHRKCF</sequence>
<name>ACTC_BRALA</name>
<proteinExistence type="evidence at transcript level"/>
<evidence type="ECO:0000250" key="1"/>
<evidence type="ECO:0000250" key="2">
    <source>
        <dbReference type="UniProtKB" id="P68137"/>
    </source>
</evidence>
<evidence type="ECO:0000305" key="3"/>
<accession>O17503</accession>
<protein>
    <recommendedName>
        <fullName>Actin, cytoplasmic</fullName>
        <ecNumber evidence="2">3.6.4.-</ecNumber>
    </recommendedName>
    <component>
        <recommendedName>
            <fullName>Actin, cytoplasmic, N-terminally processed</fullName>
        </recommendedName>
    </component>
</protein>
<keyword id="KW-0007">Acetylation</keyword>
<keyword id="KW-0067">ATP-binding</keyword>
<keyword id="KW-0963">Cytoplasm</keyword>
<keyword id="KW-0206">Cytoskeleton</keyword>
<keyword id="KW-0378">Hydrolase</keyword>
<keyword id="KW-0547">Nucleotide-binding</keyword>
<dbReference type="EC" id="3.6.4.-" evidence="2"/>
<dbReference type="EMBL" id="Y13663">
    <property type="protein sequence ID" value="CAA74014.1"/>
    <property type="molecule type" value="mRNA"/>
</dbReference>
<dbReference type="SMR" id="O17503"/>
<dbReference type="GO" id="GO:0005737">
    <property type="term" value="C:cytoplasm"/>
    <property type="evidence" value="ECO:0007669"/>
    <property type="project" value="UniProtKB-KW"/>
</dbReference>
<dbReference type="GO" id="GO:0005856">
    <property type="term" value="C:cytoskeleton"/>
    <property type="evidence" value="ECO:0007669"/>
    <property type="project" value="UniProtKB-SubCell"/>
</dbReference>
<dbReference type="GO" id="GO:0005524">
    <property type="term" value="F:ATP binding"/>
    <property type="evidence" value="ECO:0007669"/>
    <property type="project" value="UniProtKB-KW"/>
</dbReference>
<dbReference type="GO" id="GO:0016787">
    <property type="term" value="F:hydrolase activity"/>
    <property type="evidence" value="ECO:0007669"/>
    <property type="project" value="UniProtKB-KW"/>
</dbReference>
<dbReference type="CDD" id="cd10224">
    <property type="entry name" value="ASKHA_NBD_actin"/>
    <property type="match status" value="1"/>
</dbReference>
<dbReference type="FunFam" id="2.30.36.70:FF:000001">
    <property type="entry name" value="Actin, alpha skeletal muscle"/>
    <property type="match status" value="1"/>
</dbReference>
<dbReference type="FunFam" id="3.30.420.40:FF:000131">
    <property type="entry name" value="Actin, alpha skeletal muscle"/>
    <property type="match status" value="1"/>
</dbReference>
<dbReference type="FunFam" id="3.30.420.40:FF:000291">
    <property type="entry name" value="Actin, alpha skeletal muscle"/>
    <property type="match status" value="1"/>
</dbReference>
<dbReference type="FunFam" id="3.90.640.10:FF:000047">
    <property type="entry name" value="Actin, alpha skeletal muscle"/>
    <property type="match status" value="1"/>
</dbReference>
<dbReference type="FunFam" id="3.30.420.40:FF:000058">
    <property type="entry name" value="Putative actin-related protein 5"/>
    <property type="match status" value="1"/>
</dbReference>
<dbReference type="Gene3D" id="3.30.420.40">
    <property type="match status" value="2"/>
</dbReference>
<dbReference type="Gene3D" id="3.90.640.10">
    <property type="entry name" value="Actin, Chain A, domain 4"/>
    <property type="match status" value="1"/>
</dbReference>
<dbReference type="InterPro" id="IPR004000">
    <property type="entry name" value="Actin"/>
</dbReference>
<dbReference type="InterPro" id="IPR020902">
    <property type="entry name" value="Actin/actin-like_CS"/>
</dbReference>
<dbReference type="InterPro" id="IPR004001">
    <property type="entry name" value="Actin_CS"/>
</dbReference>
<dbReference type="InterPro" id="IPR043129">
    <property type="entry name" value="ATPase_NBD"/>
</dbReference>
<dbReference type="PANTHER" id="PTHR11937">
    <property type="entry name" value="ACTIN"/>
    <property type="match status" value="1"/>
</dbReference>
<dbReference type="Pfam" id="PF00022">
    <property type="entry name" value="Actin"/>
    <property type="match status" value="1"/>
</dbReference>
<dbReference type="PRINTS" id="PR00190">
    <property type="entry name" value="ACTIN"/>
</dbReference>
<dbReference type="SMART" id="SM00268">
    <property type="entry name" value="ACTIN"/>
    <property type="match status" value="1"/>
</dbReference>
<dbReference type="SUPFAM" id="SSF53067">
    <property type="entry name" value="Actin-like ATPase domain"/>
    <property type="match status" value="2"/>
</dbReference>
<dbReference type="PROSITE" id="PS00406">
    <property type="entry name" value="ACTINS_1"/>
    <property type="match status" value="1"/>
</dbReference>
<dbReference type="PROSITE" id="PS00432">
    <property type="entry name" value="ACTINS_2"/>
    <property type="match status" value="1"/>
</dbReference>
<dbReference type="PROSITE" id="PS01132">
    <property type="entry name" value="ACTINS_ACT_LIKE"/>
    <property type="match status" value="1"/>
</dbReference>
<reference key="1">
    <citation type="journal article" date="1997" name="J. Mol. Evol.">
        <title>Deuterostomic actin genes and the definition of the chordates: cDNA cloning and gene organization for cephalochordates and hemichordates.</title>
        <authorList>
            <person name="Bovenschulte M."/>
            <person name="Weber K."/>
        </authorList>
    </citation>
    <scope>NUCLEOTIDE SEQUENCE [MRNA]</scope>
</reference>
<feature type="chain" id="PRO_0000367112" description="Actin, cytoplasmic">
    <location>
        <begin position="1"/>
        <end position="375"/>
    </location>
</feature>
<feature type="initiator methionine" description="Removed; alternate" evidence="1">
    <location>
        <position position="1"/>
    </location>
</feature>
<feature type="chain" id="PRO_0000000647" description="Actin, cytoplasmic, N-terminally processed">
    <location>
        <begin position="2"/>
        <end position="375"/>
    </location>
</feature>
<feature type="modified residue" description="N-acetylmethionine; in Actin, cytoplasmic; alternate" evidence="1">
    <location>
        <position position="1"/>
    </location>
</feature>
<feature type="modified residue" description="N-acetylaspartate; in Actin, cytoplasmic, N-terminally processed" evidence="1">
    <location>
        <position position="2"/>
    </location>
</feature>
<organism>
    <name type="scientific">Branchiostoma lanceolatum</name>
    <name type="common">Common lancelet</name>
    <name type="synonym">Amphioxus lanceolatum</name>
    <dbReference type="NCBI Taxonomy" id="7740"/>
    <lineage>
        <taxon>Eukaryota</taxon>
        <taxon>Metazoa</taxon>
        <taxon>Chordata</taxon>
        <taxon>Cephalochordata</taxon>
        <taxon>Leptocardii</taxon>
        <taxon>Amphioxiformes</taxon>
        <taxon>Branchiostomatidae</taxon>
        <taxon>Branchiostoma</taxon>
    </lineage>
</organism>
<comment type="function">
    <text>Actins are highly conserved proteins that are involved in various types of cell motility and are ubiquitously expressed in all eukaryotic cells.</text>
</comment>
<comment type="catalytic activity">
    <reaction evidence="2">
        <text>ATP + H2O = ADP + phosphate + H(+)</text>
        <dbReference type="Rhea" id="RHEA:13065"/>
        <dbReference type="ChEBI" id="CHEBI:15377"/>
        <dbReference type="ChEBI" id="CHEBI:15378"/>
        <dbReference type="ChEBI" id="CHEBI:30616"/>
        <dbReference type="ChEBI" id="CHEBI:43474"/>
        <dbReference type="ChEBI" id="CHEBI:456216"/>
    </reaction>
</comment>
<comment type="subcellular location">
    <subcellularLocation>
        <location>Cytoplasm</location>
        <location>Cytoskeleton</location>
    </subcellularLocation>
</comment>
<comment type="similarity">
    <text evidence="3">Belongs to the actin family.</text>
</comment>